<protein>
    <recommendedName>
        <fullName>BTB/POZ domain-containing protein KCTD2</fullName>
    </recommendedName>
</protein>
<proteinExistence type="evidence at transcript level"/>
<feature type="initiator methionine" description="Removed" evidence="1">
    <location>
        <position position="1"/>
    </location>
</feature>
<feature type="chain" id="PRO_0000191288" description="BTB/POZ domain-containing protein KCTD2">
    <location>
        <begin position="2"/>
        <end position="266"/>
    </location>
</feature>
<feature type="domain" description="BTB">
    <location>
        <begin position="76"/>
        <end position="174"/>
    </location>
</feature>
<feature type="region of interest" description="Disordered" evidence="2">
    <location>
        <begin position="38"/>
        <end position="79"/>
    </location>
</feature>
<feature type="compositionally biased region" description="Low complexity" evidence="2">
    <location>
        <begin position="53"/>
        <end position="63"/>
    </location>
</feature>
<feature type="modified residue" description="N-acetylalanine" evidence="1">
    <location>
        <position position="2"/>
    </location>
</feature>
<accession>Q8CEZ0</accession>
<organism>
    <name type="scientific">Mus musculus</name>
    <name type="common">Mouse</name>
    <dbReference type="NCBI Taxonomy" id="10090"/>
    <lineage>
        <taxon>Eukaryota</taxon>
        <taxon>Metazoa</taxon>
        <taxon>Chordata</taxon>
        <taxon>Craniata</taxon>
        <taxon>Vertebrata</taxon>
        <taxon>Euteleostomi</taxon>
        <taxon>Mammalia</taxon>
        <taxon>Eutheria</taxon>
        <taxon>Euarchontoglires</taxon>
        <taxon>Glires</taxon>
        <taxon>Rodentia</taxon>
        <taxon>Myomorpha</taxon>
        <taxon>Muroidea</taxon>
        <taxon>Muridae</taxon>
        <taxon>Murinae</taxon>
        <taxon>Mus</taxon>
        <taxon>Mus</taxon>
    </lineage>
</organism>
<gene>
    <name type="primary">Kctd2</name>
</gene>
<reference key="1">
    <citation type="journal article" date="2005" name="Science">
        <title>The transcriptional landscape of the mammalian genome.</title>
        <authorList>
            <person name="Carninci P."/>
            <person name="Kasukawa T."/>
            <person name="Katayama S."/>
            <person name="Gough J."/>
            <person name="Frith M.C."/>
            <person name="Maeda N."/>
            <person name="Oyama R."/>
            <person name="Ravasi T."/>
            <person name="Lenhard B."/>
            <person name="Wells C."/>
            <person name="Kodzius R."/>
            <person name="Shimokawa K."/>
            <person name="Bajic V.B."/>
            <person name="Brenner S.E."/>
            <person name="Batalov S."/>
            <person name="Forrest A.R."/>
            <person name="Zavolan M."/>
            <person name="Davis M.J."/>
            <person name="Wilming L.G."/>
            <person name="Aidinis V."/>
            <person name="Allen J.E."/>
            <person name="Ambesi-Impiombato A."/>
            <person name="Apweiler R."/>
            <person name="Aturaliya R.N."/>
            <person name="Bailey T.L."/>
            <person name="Bansal M."/>
            <person name="Baxter L."/>
            <person name="Beisel K.W."/>
            <person name="Bersano T."/>
            <person name="Bono H."/>
            <person name="Chalk A.M."/>
            <person name="Chiu K.P."/>
            <person name="Choudhary V."/>
            <person name="Christoffels A."/>
            <person name="Clutterbuck D.R."/>
            <person name="Crowe M.L."/>
            <person name="Dalla E."/>
            <person name="Dalrymple B.P."/>
            <person name="de Bono B."/>
            <person name="Della Gatta G."/>
            <person name="di Bernardo D."/>
            <person name="Down T."/>
            <person name="Engstrom P."/>
            <person name="Fagiolini M."/>
            <person name="Faulkner G."/>
            <person name="Fletcher C.F."/>
            <person name="Fukushima T."/>
            <person name="Furuno M."/>
            <person name="Futaki S."/>
            <person name="Gariboldi M."/>
            <person name="Georgii-Hemming P."/>
            <person name="Gingeras T.R."/>
            <person name="Gojobori T."/>
            <person name="Green R.E."/>
            <person name="Gustincich S."/>
            <person name="Harbers M."/>
            <person name="Hayashi Y."/>
            <person name="Hensch T.K."/>
            <person name="Hirokawa N."/>
            <person name="Hill D."/>
            <person name="Huminiecki L."/>
            <person name="Iacono M."/>
            <person name="Ikeo K."/>
            <person name="Iwama A."/>
            <person name="Ishikawa T."/>
            <person name="Jakt M."/>
            <person name="Kanapin A."/>
            <person name="Katoh M."/>
            <person name="Kawasawa Y."/>
            <person name="Kelso J."/>
            <person name="Kitamura H."/>
            <person name="Kitano H."/>
            <person name="Kollias G."/>
            <person name="Krishnan S.P."/>
            <person name="Kruger A."/>
            <person name="Kummerfeld S.K."/>
            <person name="Kurochkin I.V."/>
            <person name="Lareau L.F."/>
            <person name="Lazarevic D."/>
            <person name="Lipovich L."/>
            <person name="Liu J."/>
            <person name="Liuni S."/>
            <person name="McWilliam S."/>
            <person name="Madan Babu M."/>
            <person name="Madera M."/>
            <person name="Marchionni L."/>
            <person name="Matsuda H."/>
            <person name="Matsuzawa S."/>
            <person name="Miki H."/>
            <person name="Mignone F."/>
            <person name="Miyake S."/>
            <person name="Morris K."/>
            <person name="Mottagui-Tabar S."/>
            <person name="Mulder N."/>
            <person name="Nakano N."/>
            <person name="Nakauchi H."/>
            <person name="Ng P."/>
            <person name="Nilsson R."/>
            <person name="Nishiguchi S."/>
            <person name="Nishikawa S."/>
            <person name="Nori F."/>
            <person name="Ohara O."/>
            <person name="Okazaki Y."/>
            <person name="Orlando V."/>
            <person name="Pang K.C."/>
            <person name="Pavan W.J."/>
            <person name="Pavesi G."/>
            <person name="Pesole G."/>
            <person name="Petrovsky N."/>
            <person name="Piazza S."/>
            <person name="Reed J."/>
            <person name="Reid J.F."/>
            <person name="Ring B.Z."/>
            <person name="Ringwald M."/>
            <person name="Rost B."/>
            <person name="Ruan Y."/>
            <person name="Salzberg S.L."/>
            <person name="Sandelin A."/>
            <person name="Schneider C."/>
            <person name="Schoenbach C."/>
            <person name="Sekiguchi K."/>
            <person name="Semple C.A."/>
            <person name="Seno S."/>
            <person name="Sessa L."/>
            <person name="Sheng Y."/>
            <person name="Shibata Y."/>
            <person name="Shimada H."/>
            <person name="Shimada K."/>
            <person name="Silva D."/>
            <person name="Sinclair B."/>
            <person name="Sperling S."/>
            <person name="Stupka E."/>
            <person name="Sugiura K."/>
            <person name="Sultana R."/>
            <person name="Takenaka Y."/>
            <person name="Taki K."/>
            <person name="Tammoja K."/>
            <person name="Tan S.L."/>
            <person name="Tang S."/>
            <person name="Taylor M.S."/>
            <person name="Tegner J."/>
            <person name="Teichmann S.A."/>
            <person name="Ueda H.R."/>
            <person name="van Nimwegen E."/>
            <person name="Verardo R."/>
            <person name="Wei C.L."/>
            <person name="Yagi K."/>
            <person name="Yamanishi H."/>
            <person name="Zabarovsky E."/>
            <person name="Zhu S."/>
            <person name="Zimmer A."/>
            <person name="Hide W."/>
            <person name="Bult C."/>
            <person name="Grimmond S.M."/>
            <person name="Teasdale R.D."/>
            <person name="Liu E.T."/>
            <person name="Brusic V."/>
            <person name="Quackenbush J."/>
            <person name="Wahlestedt C."/>
            <person name="Mattick J.S."/>
            <person name="Hume D.A."/>
            <person name="Kai C."/>
            <person name="Sasaki D."/>
            <person name="Tomaru Y."/>
            <person name="Fukuda S."/>
            <person name="Kanamori-Katayama M."/>
            <person name="Suzuki M."/>
            <person name="Aoki J."/>
            <person name="Arakawa T."/>
            <person name="Iida J."/>
            <person name="Imamura K."/>
            <person name="Itoh M."/>
            <person name="Kato T."/>
            <person name="Kawaji H."/>
            <person name="Kawagashira N."/>
            <person name="Kawashima T."/>
            <person name="Kojima M."/>
            <person name="Kondo S."/>
            <person name="Konno H."/>
            <person name="Nakano K."/>
            <person name="Ninomiya N."/>
            <person name="Nishio T."/>
            <person name="Okada M."/>
            <person name="Plessy C."/>
            <person name="Shibata K."/>
            <person name="Shiraki T."/>
            <person name="Suzuki S."/>
            <person name="Tagami M."/>
            <person name="Waki K."/>
            <person name="Watahiki A."/>
            <person name="Okamura-Oho Y."/>
            <person name="Suzuki H."/>
            <person name="Kawai J."/>
            <person name="Hayashizaki Y."/>
        </authorList>
    </citation>
    <scope>NUCLEOTIDE SEQUENCE [LARGE SCALE MRNA]</scope>
    <source>
        <strain>C57BL/6J</strain>
        <tissue>Tongue</tissue>
    </source>
</reference>
<evidence type="ECO:0000250" key="1">
    <source>
        <dbReference type="UniProtKB" id="Q14681"/>
    </source>
</evidence>
<evidence type="ECO:0000256" key="2">
    <source>
        <dbReference type="SAM" id="MobiDB-lite"/>
    </source>
</evidence>
<name>KCTD2_MOUSE</name>
<sequence length="266" mass="30145">MAELHWTRQWRGWEGVAAVRWATAAARAADPPALALRGRHPADTAASPPPPRTAGARARTSGADGRRRGRPLGPAQRGRYLLRDTRQTLGREPKSFLCRLCCQEDPELDSDKDETGAYLIDRDPTYFGPILNYLRHGKLIITKELGEEGVLEEAEFYNIASLVRLVKERIRDNENRTSQGPVKHVYRVLQCQEEELTQMVSTMSDGWKFEQLISIGSSYNYGNQDQAEFLCVVSRELNNSTNGIVIEPSEKPRFFRKRALECERTV</sequence>
<dbReference type="EMBL" id="AK009318">
    <property type="protein sequence ID" value="BAC25251.1"/>
    <property type="molecule type" value="mRNA"/>
</dbReference>
<dbReference type="SMR" id="Q8CEZ0"/>
<dbReference type="FunCoup" id="Q8CEZ0">
    <property type="interactions" value="458"/>
</dbReference>
<dbReference type="STRING" id="10090.ENSMUSP00000099324"/>
<dbReference type="PaxDb" id="10090-ENSMUSP00000099324"/>
<dbReference type="ProteomicsDB" id="268969"/>
<dbReference type="Pumba" id="Q8CEZ0"/>
<dbReference type="AGR" id="MGI:1917632"/>
<dbReference type="MGI" id="MGI:1917632">
    <property type="gene designation" value="Kctd2"/>
</dbReference>
<dbReference type="InParanoid" id="Q8CEZ0"/>
<dbReference type="ChiTaRS" id="Kctd2">
    <property type="organism name" value="mouse"/>
</dbReference>
<dbReference type="PRO" id="PR:Q8CEZ0"/>
<dbReference type="Proteomes" id="UP000000589">
    <property type="component" value="Unplaced"/>
</dbReference>
<dbReference type="RNAct" id="Q8CEZ0">
    <property type="molecule type" value="protein"/>
</dbReference>
<dbReference type="GO" id="GO:0044877">
    <property type="term" value="F:protein-containing complex binding"/>
    <property type="evidence" value="ECO:0000266"/>
    <property type="project" value="MGI"/>
</dbReference>
<dbReference type="GO" id="GO:0051260">
    <property type="term" value="P:protein homooligomerization"/>
    <property type="evidence" value="ECO:0007669"/>
    <property type="project" value="InterPro"/>
</dbReference>
<dbReference type="FunFam" id="3.30.70.2000:FF:000001">
    <property type="entry name" value="Potassium channel tetramerization domain-containing 17"/>
    <property type="match status" value="1"/>
</dbReference>
<dbReference type="FunFam" id="3.30.710.10:FF:000005">
    <property type="entry name" value="Potassium channel tetramerization domain-containing 17"/>
    <property type="match status" value="1"/>
</dbReference>
<dbReference type="Gene3D" id="3.30.70.2000">
    <property type="match status" value="1"/>
</dbReference>
<dbReference type="Gene3D" id="6.10.140.750">
    <property type="match status" value="1"/>
</dbReference>
<dbReference type="Gene3D" id="3.30.710.10">
    <property type="entry name" value="Potassium Channel Kv1.1, Chain A"/>
    <property type="match status" value="1"/>
</dbReference>
<dbReference type="InterPro" id="IPR000210">
    <property type="entry name" value="BTB/POZ_dom"/>
</dbReference>
<dbReference type="InterPro" id="IPR011333">
    <property type="entry name" value="SKP1/BTB/POZ_sf"/>
</dbReference>
<dbReference type="InterPro" id="IPR003131">
    <property type="entry name" value="T1-type_BTB"/>
</dbReference>
<dbReference type="PANTHER" id="PTHR14958:SF22">
    <property type="entry name" value="BTB_POZ DOMAIN-CONTAINING PROTEIN KCTD2"/>
    <property type="match status" value="1"/>
</dbReference>
<dbReference type="PANTHER" id="PTHR14958">
    <property type="entry name" value="POTASSIUM CHANNEL TETRAMERISATION DOMAIN CONTAINING PROTEIN"/>
    <property type="match status" value="1"/>
</dbReference>
<dbReference type="Pfam" id="PF02214">
    <property type="entry name" value="BTB_2"/>
    <property type="match status" value="1"/>
</dbReference>
<dbReference type="SMART" id="SM00225">
    <property type="entry name" value="BTB"/>
    <property type="match status" value="1"/>
</dbReference>
<dbReference type="SUPFAM" id="SSF54695">
    <property type="entry name" value="POZ domain"/>
    <property type="match status" value="1"/>
</dbReference>
<keyword id="KW-0007">Acetylation</keyword>
<keyword id="KW-1185">Reference proteome</keyword>